<name>TRMN6_PHOLL</name>
<dbReference type="EC" id="2.1.1.223" evidence="1"/>
<dbReference type="EMBL" id="BX571870">
    <property type="protein sequence ID" value="CAE15722.1"/>
    <property type="molecule type" value="Genomic_DNA"/>
</dbReference>
<dbReference type="RefSeq" id="WP_011147536.1">
    <property type="nucleotide sequence ID" value="NC_005126.1"/>
</dbReference>
<dbReference type="SMR" id="Q7N1W7"/>
<dbReference type="STRING" id="243265.plu3348"/>
<dbReference type="GeneID" id="48849601"/>
<dbReference type="KEGG" id="plu:plu3348"/>
<dbReference type="eggNOG" id="COG4123">
    <property type="taxonomic scope" value="Bacteria"/>
</dbReference>
<dbReference type="HOGENOM" id="CLU_061983_0_0_6"/>
<dbReference type="OrthoDB" id="5383291at2"/>
<dbReference type="Proteomes" id="UP000002514">
    <property type="component" value="Chromosome"/>
</dbReference>
<dbReference type="GO" id="GO:0005737">
    <property type="term" value="C:cytoplasm"/>
    <property type="evidence" value="ECO:0007669"/>
    <property type="project" value="UniProtKB-SubCell"/>
</dbReference>
<dbReference type="GO" id="GO:0003676">
    <property type="term" value="F:nucleic acid binding"/>
    <property type="evidence" value="ECO:0007669"/>
    <property type="project" value="InterPro"/>
</dbReference>
<dbReference type="GO" id="GO:0016430">
    <property type="term" value="F:tRNA (adenine-N6)-methyltransferase activity"/>
    <property type="evidence" value="ECO:0007669"/>
    <property type="project" value="UniProtKB-UniRule"/>
</dbReference>
<dbReference type="GO" id="GO:0032259">
    <property type="term" value="P:methylation"/>
    <property type="evidence" value="ECO:0007669"/>
    <property type="project" value="UniProtKB-KW"/>
</dbReference>
<dbReference type="GO" id="GO:0008033">
    <property type="term" value="P:tRNA processing"/>
    <property type="evidence" value="ECO:0007669"/>
    <property type="project" value="UniProtKB-UniRule"/>
</dbReference>
<dbReference type="CDD" id="cd02440">
    <property type="entry name" value="AdoMet_MTases"/>
    <property type="match status" value="1"/>
</dbReference>
<dbReference type="Gene3D" id="3.40.50.150">
    <property type="entry name" value="Vaccinia Virus protein VP39"/>
    <property type="match status" value="1"/>
</dbReference>
<dbReference type="HAMAP" id="MF_01872">
    <property type="entry name" value="tRNA_methyltr_YfiC"/>
    <property type="match status" value="1"/>
</dbReference>
<dbReference type="InterPro" id="IPR002052">
    <property type="entry name" value="DNA_methylase_N6_adenine_CS"/>
</dbReference>
<dbReference type="InterPro" id="IPR029063">
    <property type="entry name" value="SAM-dependent_MTases_sf"/>
</dbReference>
<dbReference type="InterPro" id="IPR007848">
    <property type="entry name" value="Small_mtfrase_dom"/>
</dbReference>
<dbReference type="InterPro" id="IPR050210">
    <property type="entry name" value="tRNA_Adenine-N(6)_MTase"/>
</dbReference>
<dbReference type="InterPro" id="IPR022882">
    <property type="entry name" value="tRNA_adenine-N6_MeTrfase"/>
</dbReference>
<dbReference type="NCBIfam" id="NF047853">
    <property type="entry name" value="tRm6a37MtseTrmN"/>
    <property type="match status" value="1"/>
</dbReference>
<dbReference type="PANTHER" id="PTHR47739">
    <property type="entry name" value="TRNA1(VAL) (ADENINE(37)-N6)-METHYLTRANSFERASE"/>
    <property type="match status" value="1"/>
</dbReference>
<dbReference type="PANTHER" id="PTHR47739:SF1">
    <property type="entry name" value="TRNA1(VAL) (ADENINE(37)-N6)-METHYLTRANSFERASE"/>
    <property type="match status" value="1"/>
</dbReference>
<dbReference type="Pfam" id="PF05175">
    <property type="entry name" value="MTS"/>
    <property type="match status" value="1"/>
</dbReference>
<dbReference type="PRINTS" id="PR00507">
    <property type="entry name" value="N12N6MTFRASE"/>
</dbReference>
<dbReference type="SUPFAM" id="SSF53335">
    <property type="entry name" value="S-adenosyl-L-methionine-dependent methyltransferases"/>
    <property type="match status" value="1"/>
</dbReference>
<dbReference type="PROSITE" id="PS00092">
    <property type="entry name" value="N6_MTASE"/>
    <property type="match status" value="1"/>
</dbReference>
<organism>
    <name type="scientific">Photorhabdus laumondii subsp. laumondii (strain DSM 15139 / CIP 105565 / TT01)</name>
    <name type="common">Photorhabdus luminescens subsp. laumondii</name>
    <dbReference type="NCBI Taxonomy" id="243265"/>
    <lineage>
        <taxon>Bacteria</taxon>
        <taxon>Pseudomonadati</taxon>
        <taxon>Pseudomonadota</taxon>
        <taxon>Gammaproteobacteria</taxon>
        <taxon>Enterobacterales</taxon>
        <taxon>Morganellaceae</taxon>
        <taxon>Photorhabdus</taxon>
    </lineage>
</organism>
<protein>
    <recommendedName>
        <fullName evidence="1">tRNA1(Val) (adenine(37)-N6)-methyltransferase</fullName>
        <ecNumber evidence="1">2.1.1.223</ecNumber>
    </recommendedName>
    <alternativeName>
        <fullName evidence="1">tRNA m6A37 methyltransferase</fullName>
    </alternativeName>
</protein>
<feature type="chain" id="PRO_0000387397" description="tRNA1(Val) (adenine(37)-N6)-methyltransferase">
    <location>
        <begin position="1"/>
        <end position="244"/>
    </location>
</feature>
<sequence>MKQKRLLRRDGFTFKQFFVGHDRCAMKVGTDGVLLGAWTPVSDKKAILDIGCGSGLIALMLAQRTDENTKIDAVELDTEAALQAQDNAEQSPWQRKIDVYQQDIGDFAEQYSQCYDLIVSNPPYFEPAVACRNEAREQARYTGSMTHQQLLQYAETLITADGLFCVVLPYAIGEEFETMACHQGWFSHHRVNIRDRQGKPLHRMLLAFSRKEKTGLISELTIRQPDGAYTQEFQQLVTDFYLYY</sequence>
<reference key="1">
    <citation type="journal article" date="2003" name="Nat. Biotechnol.">
        <title>The genome sequence of the entomopathogenic bacterium Photorhabdus luminescens.</title>
        <authorList>
            <person name="Duchaud E."/>
            <person name="Rusniok C."/>
            <person name="Frangeul L."/>
            <person name="Buchrieser C."/>
            <person name="Givaudan A."/>
            <person name="Taourit S."/>
            <person name="Bocs S."/>
            <person name="Boursaux-Eude C."/>
            <person name="Chandler M."/>
            <person name="Charles J.-F."/>
            <person name="Dassa E."/>
            <person name="Derose R."/>
            <person name="Derzelle S."/>
            <person name="Freyssinet G."/>
            <person name="Gaudriault S."/>
            <person name="Medigue C."/>
            <person name="Lanois A."/>
            <person name="Powell K."/>
            <person name="Siguier P."/>
            <person name="Vincent R."/>
            <person name="Wingate V."/>
            <person name="Zouine M."/>
            <person name="Glaser P."/>
            <person name="Boemare N."/>
            <person name="Danchin A."/>
            <person name="Kunst F."/>
        </authorList>
    </citation>
    <scope>NUCLEOTIDE SEQUENCE [LARGE SCALE GENOMIC DNA]</scope>
    <source>
        <strain>DSM 15139 / CIP 105565 / TT01</strain>
    </source>
</reference>
<proteinExistence type="inferred from homology"/>
<accession>Q7N1W7</accession>
<evidence type="ECO:0000255" key="1">
    <source>
        <dbReference type="HAMAP-Rule" id="MF_01872"/>
    </source>
</evidence>
<keyword id="KW-0963">Cytoplasm</keyword>
<keyword id="KW-0489">Methyltransferase</keyword>
<keyword id="KW-1185">Reference proteome</keyword>
<keyword id="KW-0949">S-adenosyl-L-methionine</keyword>
<keyword id="KW-0808">Transferase</keyword>
<keyword id="KW-0819">tRNA processing</keyword>
<gene>
    <name type="ordered locus">plu3348</name>
</gene>
<comment type="function">
    <text evidence="1">Specifically methylates the adenine in position 37 of tRNA(1)(Val) (anticodon cmo5UAC).</text>
</comment>
<comment type="catalytic activity">
    <reaction evidence="1">
        <text>adenosine(37) in tRNA1(Val) + S-adenosyl-L-methionine = N(6)-methyladenosine(37) in tRNA1(Val) + S-adenosyl-L-homocysteine + H(+)</text>
        <dbReference type="Rhea" id="RHEA:43160"/>
        <dbReference type="Rhea" id="RHEA-COMP:10369"/>
        <dbReference type="Rhea" id="RHEA-COMP:10370"/>
        <dbReference type="ChEBI" id="CHEBI:15378"/>
        <dbReference type="ChEBI" id="CHEBI:57856"/>
        <dbReference type="ChEBI" id="CHEBI:59789"/>
        <dbReference type="ChEBI" id="CHEBI:74411"/>
        <dbReference type="ChEBI" id="CHEBI:74449"/>
        <dbReference type="EC" id="2.1.1.223"/>
    </reaction>
</comment>
<comment type="subcellular location">
    <subcellularLocation>
        <location evidence="1">Cytoplasm</location>
    </subcellularLocation>
</comment>
<comment type="similarity">
    <text evidence="1">Belongs to the methyltransferase superfamily. tRNA (adenine-N(6)-)-methyltransferase family.</text>
</comment>